<organism>
    <name type="scientific">Streptococcus thermophilus (strain ATCC BAA-491 / LMD-9)</name>
    <dbReference type="NCBI Taxonomy" id="322159"/>
    <lineage>
        <taxon>Bacteria</taxon>
        <taxon>Bacillati</taxon>
        <taxon>Bacillota</taxon>
        <taxon>Bacilli</taxon>
        <taxon>Lactobacillales</taxon>
        <taxon>Streptococcaceae</taxon>
        <taxon>Streptococcus</taxon>
    </lineage>
</organism>
<reference key="1">
    <citation type="journal article" date="2006" name="Proc. Natl. Acad. Sci. U.S.A.">
        <title>Comparative genomics of the lactic acid bacteria.</title>
        <authorList>
            <person name="Makarova K.S."/>
            <person name="Slesarev A."/>
            <person name="Wolf Y.I."/>
            <person name="Sorokin A."/>
            <person name="Mirkin B."/>
            <person name="Koonin E.V."/>
            <person name="Pavlov A."/>
            <person name="Pavlova N."/>
            <person name="Karamychev V."/>
            <person name="Polouchine N."/>
            <person name="Shakhova V."/>
            <person name="Grigoriev I."/>
            <person name="Lou Y."/>
            <person name="Rohksar D."/>
            <person name="Lucas S."/>
            <person name="Huang K."/>
            <person name="Goodstein D.M."/>
            <person name="Hawkins T."/>
            <person name="Plengvidhya V."/>
            <person name="Welker D."/>
            <person name="Hughes J."/>
            <person name="Goh Y."/>
            <person name="Benson A."/>
            <person name="Baldwin K."/>
            <person name="Lee J.-H."/>
            <person name="Diaz-Muniz I."/>
            <person name="Dosti B."/>
            <person name="Smeianov V."/>
            <person name="Wechter W."/>
            <person name="Barabote R."/>
            <person name="Lorca G."/>
            <person name="Altermann E."/>
            <person name="Barrangou R."/>
            <person name="Ganesan B."/>
            <person name="Xie Y."/>
            <person name="Rawsthorne H."/>
            <person name="Tamir D."/>
            <person name="Parker C."/>
            <person name="Breidt F."/>
            <person name="Broadbent J.R."/>
            <person name="Hutkins R."/>
            <person name="O'Sullivan D."/>
            <person name="Steele J."/>
            <person name="Unlu G."/>
            <person name="Saier M.H. Jr."/>
            <person name="Klaenhammer T."/>
            <person name="Richardson P."/>
            <person name="Kozyavkin S."/>
            <person name="Weimer B.C."/>
            <person name="Mills D.A."/>
        </authorList>
    </citation>
    <scope>NUCLEOTIDE SEQUENCE [LARGE SCALE GENOMIC DNA]</scope>
    <source>
        <strain>ATCC BAA-491 / LMD-9</strain>
    </source>
</reference>
<comment type="similarity">
    <text evidence="1">Belongs to the bacterial ribosomal protein bS16 family.</text>
</comment>
<dbReference type="EMBL" id="CP000419">
    <property type="protein sequence ID" value="ABJ66659.1"/>
    <property type="molecule type" value="Genomic_DNA"/>
</dbReference>
<dbReference type="RefSeq" id="WP_002884675.1">
    <property type="nucleotide sequence ID" value="NZ_CP086001.1"/>
</dbReference>
<dbReference type="SMR" id="Q03JG3"/>
<dbReference type="GeneID" id="93792722"/>
<dbReference type="KEGG" id="ste:STER_1506"/>
<dbReference type="HOGENOM" id="CLU_100590_5_0_9"/>
<dbReference type="GO" id="GO:0005737">
    <property type="term" value="C:cytoplasm"/>
    <property type="evidence" value="ECO:0007669"/>
    <property type="project" value="UniProtKB-ARBA"/>
</dbReference>
<dbReference type="GO" id="GO:0015935">
    <property type="term" value="C:small ribosomal subunit"/>
    <property type="evidence" value="ECO:0007669"/>
    <property type="project" value="TreeGrafter"/>
</dbReference>
<dbReference type="GO" id="GO:0003735">
    <property type="term" value="F:structural constituent of ribosome"/>
    <property type="evidence" value="ECO:0007669"/>
    <property type="project" value="InterPro"/>
</dbReference>
<dbReference type="GO" id="GO:0006412">
    <property type="term" value="P:translation"/>
    <property type="evidence" value="ECO:0007669"/>
    <property type="project" value="UniProtKB-UniRule"/>
</dbReference>
<dbReference type="FunFam" id="3.30.1320.10:FF:000002">
    <property type="entry name" value="30S ribosomal protein S16"/>
    <property type="match status" value="1"/>
</dbReference>
<dbReference type="Gene3D" id="3.30.1320.10">
    <property type="match status" value="1"/>
</dbReference>
<dbReference type="HAMAP" id="MF_00385">
    <property type="entry name" value="Ribosomal_bS16"/>
    <property type="match status" value="1"/>
</dbReference>
<dbReference type="InterPro" id="IPR000307">
    <property type="entry name" value="Ribosomal_bS16"/>
</dbReference>
<dbReference type="InterPro" id="IPR023803">
    <property type="entry name" value="Ribosomal_bS16_dom_sf"/>
</dbReference>
<dbReference type="NCBIfam" id="TIGR00002">
    <property type="entry name" value="S16"/>
    <property type="match status" value="1"/>
</dbReference>
<dbReference type="PANTHER" id="PTHR12919">
    <property type="entry name" value="30S RIBOSOMAL PROTEIN S16"/>
    <property type="match status" value="1"/>
</dbReference>
<dbReference type="PANTHER" id="PTHR12919:SF20">
    <property type="entry name" value="SMALL RIBOSOMAL SUBUNIT PROTEIN BS16M"/>
    <property type="match status" value="1"/>
</dbReference>
<dbReference type="Pfam" id="PF00886">
    <property type="entry name" value="Ribosomal_S16"/>
    <property type="match status" value="1"/>
</dbReference>
<dbReference type="SUPFAM" id="SSF54565">
    <property type="entry name" value="Ribosomal protein S16"/>
    <property type="match status" value="1"/>
</dbReference>
<evidence type="ECO:0000255" key="1">
    <source>
        <dbReference type="HAMAP-Rule" id="MF_00385"/>
    </source>
</evidence>
<evidence type="ECO:0000305" key="2"/>
<sequence length="90" mass="10398">MAVKIRLTRMGSKKKPFYRINVADSRAPRDGRFIETVGTYNPLVEENQVTLKEERVLEWLSKGAQPSDTVRNILSKEGVMKKFHESKFSK</sequence>
<name>RS16_STRTD</name>
<protein>
    <recommendedName>
        <fullName evidence="1">Small ribosomal subunit protein bS16</fullName>
    </recommendedName>
    <alternativeName>
        <fullName evidence="2">30S ribosomal protein S16</fullName>
    </alternativeName>
</protein>
<feature type="chain" id="PRO_1000049365" description="Small ribosomal subunit protein bS16">
    <location>
        <begin position="1"/>
        <end position="90"/>
    </location>
</feature>
<gene>
    <name evidence="1" type="primary">rpsP</name>
    <name type="ordered locus">STER_1506</name>
</gene>
<keyword id="KW-0687">Ribonucleoprotein</keyword>
<keyword id="KW-0689">Ribosomal protein</keyword>
<proteinExistence type="inferred from homology"/>
<accession>Q03JG3</accession>